<organism>
    <name type="scientific">Lepidosiren paradoxus</name>
    <name type="common">South American lungfish</name>
    <dbReference type="NCBI Taxonomy" id="7883"/>
    <lineage>
        <taxon>Eukaryota</taxon>
        <taxon>Metazoa</taxon>
        <taxon>Chordata</taxon>
        <taxon>Craniata</taxon>
        <taxon>Vertebrata</taxon>
        <taxon>Euteleostomi</taxon>
        <taxon>Dipnomorpha</taxon>
        <taxon>Ceratodontiformes</taxon>
        <taxon>Lepidosirenoidei</taxon>
        <taxon>Lepidosirenidae</taxon>
        <taxon>Lepidosiren</taxon>
    </lineage>
</organism>
<reference key="1">
    <citation type="journal article" date="1984" name="Hoppe-Seyler's Z. Physiol. Chem.">
        <title>Primary structure, biochemical and physiological aspects of hemoglobin from South American lungfish (Lepidosiren paradoxus, Dipnoi).</title>
        <authorList>
            <person name="Rodewald K."/>
            <person name="Stangl A."/>
            <person name="Braunitzer G."/>
        </authorList>
    </citation>
    <scope>PROTEIN SEQUENCE</scope>
</reference>
<gene>
    <name type="primary">HBB</name>
</gene>
<feature type="chain" id="PRO_0000052991" description="Hemoglobin subunit beta">
    <location>
        <begin position="1"/>
        <end position="147"/>
    </location>
</feature>
<feature type="domain" description="Globin" evidence="1">
    <location>
        <begin position="2"/>
        <end position="147"/>
    </location>
</feature>
<feature type="binding site" description="distal binding residue">
    <location>
        <position position="63"/>
    </location>
    <ligand>
        <name>heme b</name>
        <dbReference type="ChEBI" id="CHEBI:60344"/>
    </ligand>
    <ligandPart>
        <name>Fe</name>
        <dbReference type="ChEBI" id="CHEBI:18248"/>
    </ligandPart>
</feature>
<feature type="binding site" description="proximal binding residue">
    <location>
        <position position="92"/>
    </location>
    <ligand>
        <name>heme b</name>
        <dbReference type="ChEBI" id="CHEBI:60344"/>
    </ligand>
    <ligandPart>
        <name>Fe</name>
        <dbReference type="ChEBI" id="CHEBI:18248"/>
    </ligandPart>
</feature>
<dbReference type="PIR" id="A02458">
    <property type="entry name" value="HBLUA"/>
</dbReference>
<dbReference type="SMR" id="P02138"/>
<dbReference type="GO" id="GO:0072562">
    <property type="term" value="C:blood microparticle"/>
    <property type="evidence" value="ECO:0007669"/>
    <property type="project" value="TreeGrafter"/>
</dbReference>
<dbReference type="GO" id="GO:0031838">
    <property type="term" value="C:haptoglobin-hemoglobin complex"/>
    <property type="evidence" value="ECO:0007669"/>
    <property type="project" value="TreeGrafter"/>
</dbReference>
<dbReference type="GO" id="GO:0005833">
    <property type="term" value="C:hemoglobin complex"/>
    <property type="evidence" value="ECO:0007669"/>
    <property type="project" value="InterPro"/>
</dbReference>
<dbReference type="GO" id="GO:0031720">
    <property type="term" value="F:haptoglobin binding"/>
    <property type="evidence" value="ECO:0007669"/>
    <property type="project" value="TreeGrafter"/>
</dbReference>
<dbReference type="GO" id="GO:0020037">
    <property type="term" value="F:heme binding"/>
    <property type="evidence" value="ECO:0007669"/>
    <property type="project" value="InterPro"/>
</dbReference>
<dbReference type="GO" id="GO:0046872">
    <property type="term" value="F:metal ion binding"/>
    <property type="evidence" value="ECO:0007669"/>
    <property type="project" value="UniProtKB-KW"/>
</dbReference>
<dbReference type="GO" id="GO:0043177">
    <property type="term" value="F:organic acid binding"/>
    <property type="evidence" value="ECO:0007669"/>
    <property type="project" value="TreeGrafter"/>
</dbReference>
<dbReference type="GO" id="GO:0019825">
    <property type="term" value="F:oxygen binding"/>
    <property type="evidence" value="ECO:0007669"/>
    <property type="project" value="InterPro"/>
</dbReference>
<dbReference type="GO" id="GO:0005344">
    <property type="term" value="F:oxygen carrier activity"/>
    <property type="evidence" value="ECO:0007669"/>
    <property type="project" value="UniProtKB-KW"/>
</dbReference>
<dbReference type="GO" id="GO:0004601">
    <property type="term" value="F:peroxidase activity"/>
    <property type="evidence" value="ECO:0007669"/>
    <property type="project" value="TreeGrafter"/>
</dbReference>
<dbReference type="GO" id="GO:0042744">
    <property type="term" value="P:hydrogen peroxide catabolic process"/>
    <property type="evidence" value="ECO:0007669"/>
    <property type="project" value="TreeGrafter"/>
</dbReference>
<dbReference type="CDD" id="cd08925">
    <property type="entry name" value="Hb-beta-like"/>
    <property type="match status" value="1"/>
</dbReference>
<dbReference type="Gene3D" id="1.10.490.10">
    <property type="entry name" value="Globins"/>
    <property type="match status" value="1"/>
</dbReference>
<dbReference type="InterPro" id="IPR000971">
    <property type="entry name" value="Globin"/>
</dbReference>
<dbReference type="InterPro" id="IPR009050">
    <property type="entry name" value="Globin-like_sf"/>
</dbReference>
<dbReference type="InterPro" id="IPR012292">
    <property type="entry name" value="Globin/Proto"/>
</dbReference>
<dbReference type="InterPro" id="IPR002337">
    <property type="entry name" value="Hemoglobin_b"/>
</dbReference>
<dbReference type="InterPro" id="IPR050056">
    <property type="entry name" value="Hemoglobin_oxygen_transport"/>
</dbReference>
<dbReference type="PANTHER" id="PTHR11442">
    <property type="entry name" value="HEMOGLOBIN FAMILY MEMBER"/>
    <property type="match status" value="1"/>
</dbReference>
<dbReference type="PANTHER" id="PTHR11442:SF7">
    <property type="entry name" value="HEMOGLOBIN SUBUNIT EPSILON"/>
    <property type="match status" value="1"/>
</dbReference>
<dbReference type="Pfam" id="PF00042">
    <property type="entry name" value="Globin"/>
    <property type="match status" value="1"/>
</dbReference>
<dbReference type="PRINTS" id="PR00814">
    <property type="entry name" value="BETAHAEM"/>
</dbReference>
<dbReference type="SUPFAM" id="SSF46458">
    <property type="entry name" value="Globin-like"/>
    <property type="match status" value="1"/>
</dbReference>
<dbReference type="PROSITE" id="PS01033">
    <property type="entry name" value="GLOBIN"/>
    <property type="match status" value="1"/>
</dbReference>
<protein>
    <recommendedName>
        <fullName>Hemoglobin subunit beta</fullName>
    </recommendedName>
    <alternativeName>
        <fullName>Beta-globin</fullName>
    </alternativeName>
    <alternativeName>
        <fullName>Hemoglobin beta chain</fullName>
    </alternativeName>
</protein>
<sequence length="147" mass="16817">VHWEDAEKQYIVSVFSKIDVDHVGANTLERVLIVFPWTKRYFNSFGDLSSPGAIKHNNKVSAHGRKVLAAIIECTRHFGNIKGHLANLSHLHSEKLHVDPHNFRVLGQCLRIELAAALGFKEFTPERNAYFQKFMDVISHSLGREYH</sequence>
<evidence type="ECO:0000255" key="1">
    <source>
        <dbReference type="PROSITE-ProRule" id="PRU00238"/>
    </source>
</evidence>
<accession>P02138</accession>
<proteinExistence type="evidence at protein level"/>
<keyword id="KW-0903">Direct protein sequencing</keyword>
<keyword id="KW-0349">Heme</keyword>
<keyword id="KW-0408">Iron</keyword>
<keyword id="KW-0479">Metal-binding</keyword>
<keyword id="KW-0561">Oxygen transport</keyword>
<keyword id="KW-0813">Transport</keyword>
<comment type="function">
    <text>Involved in oxygen transport from the lung to the various peripheral tissues.</text>
</comment>
<comment type="subunit">
    <text>Heterotetramer of two alpha chains and two beta chains.</text>
</comment>
<comment type="tissue specificity">
    <text>Red blood cells.</text>
</comment>
<comment type="similarity">
    <text evidence="1">Belongs to the globin family.</text>
</comment>
<name>HBB_LEPPA</name>